<gene>
    <name evidence="1" type="primary">ubiA</name>
    <name type="ordered locus">Patl_0067</name>
</gene>
<proteinExistence type="inferred from homology"/>
<protein>
    <recommendedName>
        <fullName evidence="1">4-hydroxybenzoate octaprenyltransferase</fullName>
        <ecNumber evidence="1">2.5.1.39</ecNumber>
    </recommendedName>
    <alternativeName>
        <fullName evidence="1">4-HB polyprenyltransferase</fullName>
    </alternativeName>
</protein>
<accession>Q15ZT9</accession>
<dbReference type="EC" id="2.5.1.39" evidence="1"/>
<dbReference type="EMBL" id="CP000388">
    <property type="protein sequence ID" value="ABG38599.1"/>
    <property type="status" value="ALT_INIT"/>
    <property type="molecule type" value="Genomic_DNA"/>
</dbReference>
<dbReference type="SMR" id="Q15ZT9"/>
<dbReference type="STRING" id="342610.Patl_0067"/>
<dbReference type="KEGG" id="pat:Patl_0067"/>
<dbReference type="eggNOG" id="COG0382">
    <property type="taxonomic scope" value="Bacteria"/>
</dbReference>
<dbReference type="HOGENOM" id="CLU_034879_1_0_6"/>
<dbReference type="UniPathway" id="UPA00232"/>
<dbReference type="Proteomes" id="UP000001981">
    <property type="component" value="Chromosome"/>
</dbReference>
<dbReference type="GO" id="GO:0005886">
    <property type="term" value="C:plasma membrane"/>
    <property type="evidence" value="ECO:0007669"/>
    <property type="project" value="UniProtKB-SubCell"/>
</dbReference>
<dbReference type="GO" id="GO:0008412">
    <property type="term" value="F:4-hydroxybenzoate polyprenyltransferase activity"/>
    <property type="evidence" value="ECO:0007669"/>
    <property type="project" value="UniProtKB-UniRule"/>
</dbReference>
<dbReference type="GO" id="GO:0006744">
    <property type="term" value="P:ubiquinone biosynthetic process"/>
    <property type="evidence" value="ECO:0007669"/>
    <property type="project" value="UniProtKB-UniRule"/>
</dbReference>
<dbReference type="CDD" id="cd13959">
    <property type="entry name" value="PT_UbiA_COQ2"/>
    <property type="match status" value="1"/>
</dbReference>
<dbReference type="FunFam" id="1.10.357.140:FF:000002">
    <property type="entry name" value="4-hydroxybenzoate octaprenyltransferase"/>
    <property type="match status" value="1"/>
</dbReference>
<dbReference type="FunFam" id="1.20.120.1780:FF:000001">
    <property type="entry name" value="4-hydroxybenzoate octaprenyltransferase"/>
    <property type="match status" value="1"/>
</dbReference>
<dbReference type="Gene3D" id="1.10.357.140">
    <property type="entry name" value="UbiA prenyltransferase"/>
    <property type="match status" value="1"/>
</dbReference>
<dbReference type="Gene3D" id="1.20.120.1780">
    <property type="entry name" value="UbiA prenyltransferase"/>
    <property type="match status" value="1"/>
</dbReference>
<dbReference type="HAMAP" id="MF_01635">
    <property type="entry name" value="UbiA"/>
    <property type="match status" value="1"/>
</dbReference>
<dbReference type="InterPro" id="IPR006370">
    <property type="entry name" value="HB_polyprenyltransferase-like"/>
</dbReference>
<dbReference type="InterPro" id="IPR039653">
    <property type="entry name" value="Prenyltransferase"/>
</dbReference>
<dbReference type="InterPro" id="IPR000537">
    <property type="entry name" value="UbiA_prenyltransferase"/>
</dbReference>
<dbReference type="InterPro" id="IPR044878">
    <property type="entry name" value="UbiA_sf"/>
</dbReference>
<dbReference type="NCBIfam" id="TIGR01474">
    <property type="entry name" value="ubiA_proteo"/>
    <property type="match status" value="1"/>
</dbReference>
<dbReference type="PANTHER" id="PTHR11048:SF28">
    <property type="entry name" value="4-HYDROXYBENZOATE POLYPRENYLTRANSFERASE, MITOCHONDRIAL"/>
    <property type="match status" value="1"/>
</dbReference>
<dbReference type="PANTHER" id="PTHR11048">
    <property type="entry name" value="PRENYLTRANSFERASES"/>
    <property type="match status" value="1"/>
</dbReference>
<dbReference type="Pfam" id="PF01040">
    <property type="entry name" value="UbiA"/>
    <property type="match status" value="1"/>
</dbReference>
<evidence type="ECO:0000255" key="1">
    <source>
        <dbReference type="HAMAP-Rule" id="MF_01635"/>
    </source>
</evidence>
<evidence type="ECO:0000305" key="2"/>
<organism>
    <name type="scientific">Pseudoalteromonas atlantica (strain T6c / ATCC BAA-1087)</name>
    <dbReference type="NCBI Taxonomy" id="3042615"/>
    <lineage>
        <taxon>Bacteria</taxon>
        <taxon>Pseudomonadati</taxon>
        <taxon>Pseudomonadota</taxon>
        <taxon>Gammaproteobacteria</taxon>
        <taxon>Alteromonadales</taxon>
        <taxon>Alteromonadaceae</taxon>
        <taxon>Paraglaciecola</taxon>
    </lineage>
</organism>
<sequence length="285" mass="31398">MSRSVLQGFWLLMRADKPVGSYLLLWPTLWALMIAAQGLPPWHITGIFMAGVFVMRSAGCVINDYADRKVDGKVDRTKARPLVSGVVTEKQALGLFATLVGVAFLLVLALNWQTIVLSLGALALASVYPFMKRYTHFPQVVLGAAFGWAIPMAFMAVTEAVPAIAWWLFAINVLWTVAYDTQYAMVDRNDDLQIGVKSTAVLFGQYDRLIIGLLQLSVVVMLLGMGQYLGFTLSFYVGVLLASVLFIHQQRLISGRARQACFSAFLNNNYVGMAIALGIAGHYFM</sequence>
<comment type="function">
    <text evidence="1">Catalyzes the prenylation of para-hydroxybenzoate (PHB) with an all-trans polyprenyl group. Mediates the second step in the final reaction sequence of ubiquinone-8 (UQ-8) biosynthesis, which is the condensation of the polyisoprenoid side chain with PHB, generating the first membrane-bound Q intermediate 3-octaprenyl-4-hydroxybenzoate.</text>
</comment>
<comment type="catalytic activity">
    <reaction evidence="1">
        <text>all-trans-octaprenyl diphosphate + 4-hydroxybenzoate = 4-hydroxy-3-(all-trans-octaprenyl)benzoate + diphosphate</text>
        <dbReference type="Rhea" id="RHEA:27782"/>
        <dbReference type="ChEBI" id="CHEBI:1617"/>
        <dbReference type="ChEBI" id="CHEBI:17879"/>
        <dbReference type="ChEBI" id="CHEBI:33019"/>
        <dbReference type="ChEBI" id="CHEBI:57711"/>
        <dbReference type="EC" id="2.5.1.39"/>
    </reaction>
</comment>
<comment type="cofactor">
    <cofactor evidence="1">
        <name>Mg(2+)</name>
        <dbReference type="ChEBI" id="CHEBI:18420"/>
    </cofactor>
</comment>
<comment type="pathway">
    <text evidence="1">Cofactor biosynthesis; ubiquinone biosynthesis.</text>
</comment>
<comment type="subcellular location">
    <subcellularLocation>
        <location evidence="1">Cell inner membrane</location>
        <topology evidence="1">Multi-pass membrane protein</topology>
    </subcellularLocation>
</comment>
<comment type="similarity">
    <text evidence="1">Belongs to the UbiA prenyltransferase family.</text>
</comment>
<comment type="sequence caution" evidence="2">
    <conflict type="erroneous initiation">
        <sequence resource="EMBL-CDS" id="ABG38599"/>
    </conflict>
</comment>
<feature type="chain" id="PRO_0000262817" description="4-hydroxybenzoate octaprenyltransferase">
    <location>
        <begin position="1"/>
        <end position="285"/>
    </location>
</feature>
<feature type="transmembrane region" description="Helical" evidence="1">
    <location>
        <begin position="20"/>
        <end position="39"/>
    </location>
</feature>
<feature type="transmembrane region" description="Helical" evidence="1">
    <location>
        <begin position="92"/>
        <end position="112"/>
    </location>
</feature>
<feature type="transmembrane region" description="Helical" evidence="1">
    <location>
        <begin position="137"/>
        <end position="157"/>
    </location>
</feature>
<feature type="transmembrane region" description="Helical" evidence="1">
    <location>
        <begin position="159"/>
        <end position="179"/>
    </location>
</feature>
<feature type="transmembrane region" description="Helical" evidence="1">
    <location>
        <begin position="206"/>
        <end position="226"/>
    </location>
</feature>
<feature type="transmembrane region" description="Helical" evidence="1">
    <location>
        <begin position="228"/>
        <end position="248"/>
    </location>
</feature>
<feature type="transmembrane region" description="Helical" evidence="1">
    <location>
        <begin position="260"/>
        <end position="280"/>
    </location>
</feature>
<reference key="1">
    <citation type="submission" date="2006-06" db="EMBL/GenBank/DDBJ databases">
        <title>Complete sequence of Pseudoalteromonas atlantica T6c.</title>
        <authorList>
            <consortium name="US DOE Joint Genome Institute"/>
            <person name="Copeland A."/>
            <person name="Lucas S."/>
            <person name="Lapidus A."/>
            <person name="Barry K."/>
            <person name="Detter J.C."/>
            <person name="Glavina del Rio T."/>
            <person name="Hammon N."/>
            <person name="Israni S."/>
            <person name="Dalin E."/>
            <person name="Tice H."/>
            <person name="Pitluck S."/>
            <person name="Saunders E."/>
            <person name="Brettin T."/>
            <person name="Bruce D."/>
            <person name="Han C."/>
            <person name="Tapia R."/>
            <person name="Gilna P."/>
            <person name="Schmutz J."/>
            <person name="Larimer F."/>
            <person name="Land M."/>
            <person name="Hauser L."/>
            <person name="Kyrpides N."/>
            <person name="Kim E."/>
            <person name="Karls A.C."/>
            <person name="Bartlett D."/>
            <person name="Higgins B.P."/>
            <person name="Richardson P."/>
        </authorList>
    </citation>
    <scope>NUCLEOTIDE SEQUENCE [LARGE SCALE GENOMIC DNA]</scope>
    <source>
        <strain>T6c / ATCC BAA-1087</strain>
    </source>
</reference>
<keyword id="KW-0997">Cell inner membrane</keyword>
<keyword id="KW-1003">Cell membrane</keyword>
<keyword id="KW-0460">Magnesium</keyword>
<keyword id="KW-0472">Membrane</keyword>
<keyword id="KW-0808">Transferase</keyword>
<keyword id="KW-0812">Transmembrane</keyword>
<keyword id="KW-1133">Transmembrane helix</keyword>
<keyword id="KW-0831">Ubiquinone biosynthesis</keyword>
<name>UBIA_PSEA6</name>